<name>ASSY_SHEPA</name>
<dbReference type="EC" id="6.3.4.5" evidence="1"/>
<dbReference type="EMBL" id="CP000851">
    <property type="protein sequence ID" value="ABV85558.1"/>
    <property type="molecule type" value="Genomic_DNA"/>
</dbReference>
<dbReference type="RefSeq" id="WP_012153499.1">
    <property type="nucleotide sequence ID" value="NC_009901.1"/>
</dbReference>
<dbReference type="SMR" id="A8GZ21"/>
<dbReference type="STRING" id="398579.Spea_0230"/>
<dbReference type="KEGG" id="spl:Spea_0230"/>
<dbReference type="eggNOG" id="COG0137">
    <property type="taxonomic scope" value="Bacteria"/>
</dbReference>
<dbReference type="HOGENOM" id="CLU_032784_4_2_6"/>
<dbReference type="OrthoDB" id="9801641at2"/>
<dbReference type="UniPathway" id="UPA00068">
    <property type="reaction ID" value="UER00113"/>
</dbReference>
<dbReference type="Proteomes" id="UP000002608">
    <property type="component" value="Chromosome"/>
</dbReference>
<dbReference type="GO" id="GO:0005737">
    <property type="term" value="C:cytoplasm"/>
    <property type="evidence" value="ECO:0007669"/>
    <property type="project" value="UniProtKB-SubCell"/>
</dbReference>
<dbReference type="GO" id="GO:0004055">
    <property type="term" value="F:argininosuccinate synthase activity"/>
    <property type="evidence" value="ECO:0007669"/>
    <property type="project" value="UniProtKB-UniRule"/>
</dbReference>
<dbReference type="GO" id="GO:0005524">
    <property type="term" value="F:ATP binding"/>
    <property type="evidence" value="ECO:0007669"/>
    <property type="project" value="UniProtKB-UniRule"/>
</dbReference>
<dbReference type="GO" id="GO:0000053">
    <property type="term" value="P:argininosuccinate metabolic process"/>
    <property type="evidence" value="ECO:0007669"/>
    <property type="project" value="TreeGrafter"/>
</dbReference>
<dbReference type="GO" id="GO:0006526">
    <property type="term" value="P:L-arginine biosynthetic process"/>
    <property type="evidence" value="ECO:0007669"/>
    <property type="project" value="UniProtKB-UniRule"/>
</dbReference>
<dbReference type="GO" id="GO:0000050">
    <property type="term" value="P:urea cycle"/>
    <property type="evidence" value="ECO:0007669"/>
    <property type="project" value="TreeGrafter"/>
</dbReference>
<dbReference type="CDD" id="cd01999">
    <property type="entry name" value="ASS"/>
    <property type="match status" value="1"/>
</dbReference>
<dbReference type="FunFam" id="3.40.50.620:FF:000019">
    <property type="entry name" value="Argininosuccinate synthase"/>
    <property type="match status" value="1"/>
</dbReference>
<dbReference type="FunFam" id="3.90.1260.10:FF:000007">
    <property type="entry name" value="Argininosuccinate synthase"/>
    <property type="match status" value="1"/>
</dbReference>
<dbReference type="Gene3D" id="3.90.1260.10">
    <property type="entry name" value="Argininosuccinate synthetase, chain A, domain 2"/>
    <property type="match status" value="1"/>
</dbReference>
<dbReference type="Gene3D" id="3.40.50.620">
    <property type="entry name" value="HUPs"/>
    <property type="match status" value="1"/>
</dbReference>
<dbReference type="Gene3D" id="1.20.5.470">
    <property type="entry name" value="Single helix bin"/>
    <property type="match status" value="1"/>
</dbReference>
<dbReference type="HAMAP" id="MF_00005">
    <property type="entry name" value="Arg_succ_synth_type1"/>
    <property type="match status" value="1"/>
</dbReference>
<dbReference type="InterPro" id="IPR048268">
    <property type="entry name" value="Arginosuc_syn_C"/>
</dbReference>
<dbReference type="InterPro" id="IPR048267">
    <property type="entry name" value="Arginosuc_syn_N"/>
</dbReference>
<dbReference type="InterPro" id="IPR001518">
    <property type="entry name" value="Arginosuc_synth"/>
</dbReference>
<dbReference type="InterPro" id="IPR018223">
    <property type="entry name" value="Arginosuc_synth_CS"/>
</dbReference>
<dbReference type="InterPro" id="IPR023434">
    <property type="entry name" value="Arginosuc_synth_type_1_subfam"/>
</dbReference>
<dbReference type="InterPro" id="IPR024074">
    <property type="entry name" value="AS_cat/multimer_dom_body"/>
</dbReference>
<dbReference type="InterPro" id="IPR014729">
    <property type="entry name" value="Rossmann-like_a/b/a_fold"/>
</dbReference>
<dbReference type="NCBIfam" id="TIGR00032">
    <property type="entry name" value="argG"/>
    <property type="match status" value="1"/>
</dbReference>
<dbReference type="NCBIfam" id="NF001770">
    <property type="entry name" value="PRK00509.1"/>
    <property type="match status" value="1"/>
</dbReference>
<dbReference type="PANTHER" id="PTHR11587">
    <property type="entry name" value="ARGININOSUCCINATE SYNTHASE"/>
    <property type="match status" value="1"/>
</dbReference>
<dbReference type="PANTHER" id="PTHR11587:SF2">
    <property type="entry name" value="ARGININOSUCCINATE SYNTHASE"/>
    <property type="match status" value="1"/>
</dbReference>
<dbReference type="Pfam" id="PF20979">
    <property type="entry name" value="Arginosuc_syn_C"/>
    <property type="match status" value="1"/>
</dbReference>
<dbReference type="Pfam" id="PF00764">
    <property type="entry name" value="Arginosuc_synth"/>
    <property type="match status" value="1"/>
</dbReference>
<dbReference type="SUPFAM" id="SSF52402">
    <property type="entry name" value="Adenine nucleotide alpha hydrolases-like"/>
    <property type="match status" value="1"/>
</dbReference>
<dbReference type="SUPFAM" id="SSF69864">
    <property type="entry name" value="Argininosuccinate synthetase, C-terminal domain"/>
    <property type="match status" value="1"/>
</dbReference>
<dbReference type="PROSITE" id="PS00564">
    <property type="entry name" value="ARGININOSUCCIN_SYN_1"/>
    <property type="match status" value="1"/>
</dbReference>
<dbReference type="PROSITE" id="PS00565">
    <property type="entry name" value="ARGININOSUCCIN_SYN_2"/>
    <property type="match status" value="1"/>
</dbReference>
<feature type="chain" id="PRO_1000073831" description="Argininosuccinate synthase">
    <location>
        <begin position="1"/>
        <end position="412"/>
    </location>
</feature>
<feature type="binding site" evidence="1">
    <location>
        <begin position="20"/>
        <end position="28"/>
    </location>
    <ligand>
        <name>ATP</name>
        <dbReference type="ChEBI" id="CHEBI:30616"/>
    </ligand>
</feature>
<feature type="binding site" evidence="1">
    <location>
        <position position="48"/>
    </location>
    <ligand>
        <name>ATP</name>
        <dbReference type="ChEBI" id="CHEBI:30616"/>
    </ligand>
</feature>
<feature type="binding site" evidence="1">
    <location>
        <position position="100"/>
    </location>
    <ligand>
        <name>L-citrulline</name>
        <dbReference type="ChEBI" id="CHEBI:57743"/>
    </ligand>
</feature>
<feature type="binding site" evidence="1">
    <location>
        <position position="105"/>
    </location>
    <ligand>
        <name>L-citrulline</name>
        <dbReference type="ChEBI" id="CHEBI:57743"/>
    </ligand>
</feature>
<feature type="binding site" evidence="1">
    <location>
        <position position="130"/>
    </location>
    <ligand>
        <name>ATP</name>
        <dbReference type="ChEBI" id="CHEBI:30616"/>
    </ligand>
</feature>
<feature type="binding site" evidence="1">
    <location>
        <position position="132"/>
    </location>
    <ligand>
        <name>L-aspartate</name>
        <dbReference type="ChEBI" id="CHEBI:29991"/>
    </ligand>
</feature>
<feature type="binding site" evidence="1">
    <location>
        <position position="136"/>
    </location>
    <ligand>
        <name>L-aspartate</name>
        <dbReference type="ChEBI" id="CHEBI:29991"/>
    </ligand>
</feature>
<feature type="binding site" evidence="1">
    <location>
        <position position="136"/>
    </location>
    <ligand>
        <name>L-citrulline</name>
        <dbReference type="ChEBI" id="CHEBI:57743"/>
    </ligand>
</feature>
<feature type="binding site" evidence="1">
    <location>
        <position position="137"/>
    </location>
    <ligand>
        <name>L-aspartate</name>
        <dbReference type="ChEBI" id="CHEBI:29991"/>
    </ligand>
</feature>
<feature type="binding site" evidence="1">
    <location>
        <position position="140"/>
    </location>
    <ligand>
        <name>L-citrulline</name>
        <dbReference type="ChEBI" id="CHEBI:57743"/>
    </ligand>
</feature>
<feature type="binding site" evidence="1">
    <location>
        <position position="189"/>
    </location>
    <ligand>
        <name>L-citrulline</name>
        <dbReference type="ChEBI" id="CHEBI:57743"/>
    </ligand>
</feature>
<feature type="binding site" evidence="1">
    <location>
        <position position="198"/>
    </location>
    <ligand>
        <name>L-citrulline</name>
        <dbReference type="ChEBI" id="CHEBI:57743"/>
    </ligand>
</feature>
<feature type="binding site" evidence="1">
    <location>
        <position position="274"/>
    </location>
    <ligand>
        <name>L-citrulline</name>
        <dbReference type="ChEBI" id="CHEBI:57743"/>
    </ligand>
</feature>
<feature type="binding site" evidence="1">
    <location>
        <position position="286"/>
    </location>
    <ligand>
        <name>L-citrulline</name>
        <dbReference type="ChEBI" id="CHEBI:57743"/>
    </ligand>
</feature>
<evidence type="ECO:0000255" key="1">
    <source>
        <dbReference type="HAMAP-Rule" id="MF_00005"/>
    </source>
</evidence>
<gene>
    <name evidence="1" type="primary">argG</name>
    <name type="ordered locus">Spea_0230</name>
</gene>
<reference key="1">
    <citation type="submission" date="2007-10" db="EMBL/GenBank/DDBJ databases">
        <title>Complete sequence of Shewanella pealeana ATCC 700345.</title>
        <authorList>
            <consortium name="US DOE Joint Genome Institute"/>
            <person name="Copeland A."/>
            <person name="Lucas S."/>
            <person name="Lapidus A."/>
            <person name="Barry K."/>
            <person name="Glavina del Rio T."/>
            <person name="Dalin E."/>
            <person name="Tice H."/>
            <person name="Pitluck S."/>
            <person name="Chertkov O."/>
            <person name="Brettin T."/>
            <person name="Bruce D."/>
            <person name="Detter J.C."/>
            <person name="Han C."/>
            <person name="Schmutz J."/>
            <person name="Larimer F."/>
            <person name="Land M."/>
            <person name="Hauser L."/>
            <person name="Kyrpides N."/>
            <person name="Kim E."/>
            <person name="Zhao J.-S.Z."/>
            <person name="Manno D."/>
            <person name="Hawari J."/>
            <person name="Richardson P."/>
        </authorList>
    </citation>
    <scope>NUCLEOTIDE SEQUENCE [LARGE SCALE GENOMIC DNA]</scope>
    <source>
        <strain>ATCC 700345 / ANG-SQ1</strain>
    </source>
</reference>
<proteinExistence type="inferred from homology"/>
<organism>
    <name type="scientific">Shewanella pealeana (strain ATCC 700345 / ANG-SQ1)</name>
    <dbReference type="NCBI Taxonomy" id="398579"/>
    <lineage>
        <taxon>Bacteria</taxon>
        <taxon>Pseudomonadati</taxon>
        <taxon>Pseudomonadota</taxon>
        <taxon>Gammaproteobacteria</taxon>
        <taxon>Alteromonadales</taxon>
        <taxon>Shewanellaceae</taxon>
        <taxon>Shewanella</taxon>
    </lineage>
</organism>
<keyword id="KW-0028">Amino-acid biosynthesis</keyword>
<keyword id="KW-0055">Arginine biosynthesis</keyword>
<keyword id="KW-0067">ATP-binding</keyword>
<keyword id="KW-0963">Cytoplasm</keyword>
<keyword id="KW-0436">Ligase</keyword>
<keyword id="KW-0547">Nucleotide-binding</keyword>
<keyword id="KW-1185">Reference proteome</keyword>
<accession>A8GZ21</accession>
<sequence length="412" mass="44979">MSIENSAVSDHSGVNKVVLAYSGGLDTSAIIPWLKETYDNCEIVAFCADVGQGDAELEGLYEKAIASGASECYIVDLKEELVADYIYPTIATGAIYEGTYLLGTSMARPIIAKAQVEVARKVGADAVCHGCTGKGNDQVRFEGCFAALAPDLKVIAPWREWEMVSREDLLDYLAERNIATAASATKIYSRDANAWHISHEGGELEDPWNEPSKGVWTMTVAPEDAPNQPEYVSLELEQGKITKVNGEALSPYKALMVLNEVAGAHGVGRIDITENRLVGMKSRGCYETPGGTVMFAALRAIEELVLDKTSREWREQVGAQMAHLVYDGRWFTPLCESLLGASKPLADLVNGEVVVKLYKGQASVVKKRSPNSLYSEEFATFGADDVYNQKDAEGFIRLYSLSSRIRALHSQK</sequence>
<comment type="catalytic activity">
    <reaction evidence="1">
        <text>L-citrulline + L-aspartate + ATP = 2-(N(omega)-L-arginino)succinate + AMP + diphosphate + H(+)</text>
        <dbReference type="Rhea" id="RHEA:10932"/>
        <dbReference type="ChEBI" id="CHEBI:15378"/>
        <dbReference type="ChEBI" id="CHEBI:29991"/>
        <dbReference type="ChEBI" id="CHEBI:30616"/>
        <dbReference type="ChEBI" id="CHEBI:33019"/>
        <dbReference type="ChEBI" id="CHEBI:57472"/>
        <dbReference type="ChEBI" id="CHEBI:57743"/>
        <dbReference type="ChEBI" id="CHEBI:456215"/>
        <dbReference type="EC" id="6.3.4.5"/>
    </reaction>
</comment>
<comment type="pathway">
    <text evidence="1">Amino-acid biosynthesis; L-arginine biosynthesis; L-arginine from L-ornithine and carbamoyl phosphate: step 2/3.</text>
</comment>
<comment type="subunit">
    <text evidence="1">Homotetramer.</text>
</comment>
<comment type="subcellular location">
    <subcellularLocation>
        <location evidence="1">Cytoplasm</location>
    </subcellularLocation>
</comment>
<comment type="similarity">
    <text evidence="1">Belongs to the argininosuccinate synthase family. Type 1 subfamily.</text>
</comment>
<protein>
    <recommendedName>
        <fullName evidence="1">Argininosuccinate synthase</fullName>
        <ecNumber evidence="1">6.3.4.5</ecNumber>
    </recommendedName>
    <alternativeName>
        <fullName evidence="1">Citrulline--aspartate ligase</fullName>
    </alternativeName>
</protein>